<evidence type="ECO:0000250" key="1">
    <source>
        <dbReference type="UniProtKB" id="P02144"/>
    </source>
</evidence>
<evidence type="ECO:0000250" key="2">
    <source>
        <dbReference type="UniProtKB" id="P02185"/>
    </source>
</evidence>
<evidence type="ECO:0000250" key="3">
    <source>
        <dbReference type="UniProtKB" id="P02189"/>
    </source>
</evidence>
<evidence type="ECO:0000250" key="4">
    <source>
        <dbReference type="UniProtKB" id="P04247"/>
    </source>
</evidence>
<evidence type="ECO:0000250" key="5">
    <source>
        <dbReference type="UniProtKB" id="P68082"/>
    </source>
</evidence>
<evidence type="ECO:0000250" key="6">
    <source>
        <dbReference type="UniProtKB" id="Q9QZ76"/>
    </source>
</evidence>
<evidence type="ECO:0000255" key="7">
    <source>
        <dbReference type="PROSITE-ProRule" id="PRU00238"/>
    </source>
</evidence>
<proteinExistence type="evidence at transcript level"/>
<dbReference type="EC" id="1.7.-.-" evidence="1"/>
<dbReference type="EC" id="1.11.1.-" evidence="1"/>
<dbReference type="EMBL" id="DQ324649">
    <property type="protein sequence ID" value="ABC55872.1"/>
    <property type="molecule type" value="mRNA"/>
</dbReference>
<dbReference type="SMR" id="Q2MJN4"/>
<dbReference type="Proteomes" id="UP000694520">
    <property type="component" value="Unplaced"/>
</dbReference>
<dbReference type="GO" id="GO:0070062">
    <property type="term" value="C:extracellular exosome"/>
    <property type="evidence" value="ECO:0007669"/>
    <property type="project" value="TreeGrafter"/>
</dbReference>
<dbReference type="GO" id="GO:0016528">
    <property type="term" value="C:sarcoplasm"/>
    <property type="evidence" value="ECO:0000250"/>
    <property type="project" value="UniProtKB"/>
</dbReference>
<dbReference type="GO" id="GO:0020037">
    <property type="term" value="F:heme binding"/>
    <property type="evidence" value="ECO:0007669"/>
    <property type="project" value="InterPro"/>
</dbReference>
<dbReference type="GO" id="GO:0046872">
    <property type="term" value="F:metal ion binding"/>
    <property type="evidence" value="ECO:0007669"/>
    <property type="project" value="UniProtKB-KW"/>
</dbReference>
<dbReference type="GO" id="GO:0098809">
    <property type="term" value="F:nitrite reductase activity"/>
    <property type="evidence" value="ECO:0000250"/>
    <property type="project" value="UniProtKB"/>
</dbReference>
<dbReference type="GO" id="GO:0019825">
    <property type="term" value="F:oxygen binding"/>
    <property type="evidence" value="ECO:0007669"/>
    <property type="project" value="InterPro"/>
</dbReference>
<dbReference type="GO" id="GO:0005344">
    <property type="term" value="F:oxygen carrier activity"/>
    <property type="evidence" value="ECO:0000250"/>
    <property type="project" value="UniProtKB"/>
</dbReference>
<dbReference type="GO" id="GO:0004601">
    <property type="term" value="F:peroxidase activity"/>
    <property type="evidence" value="ECO:0000250"/>
    <property type="project" value="UniProtKB"/>
</dbReference>
<dbReference type="GO" id="GO:0019430">
    <property type="term" value="P:removal of superoxide radicals"/>
    <property type="evidence" value="ECO:0000250"/>
    <property type="project" value="UniProtKB"/>
</dbReference>
<dbReference type="Gene3D" id="6.10.140.2100">
    <property type="match status" value="1"/>
</dbReference>
<dbReference type="Gene3D" id="6.10.140.2110">
    <property type="match status" value="1"/>
</dbReference>
<dbReference type="InterPro" id="IPR000971">
    <property type="entry name" value="Globin"/>
</dbReference>
<dbReference type="InterPro" id="IPR009050">
    <property type="entry name" value="Globin-like_sf"/>
</dbReference>
<dbReference type="InterPro" id="IPR002335">
    <property type="entry name" value="Myoglobin"/>
</dbReference>
<dbReference type="PANTHER" id="PTHR47132">
    <property type="entry name" value="MYOGLOBIN"/>
    <property type="match status" value="1"/>
</dbReference>
<dbReference type="PANTHER" id="PTHR47132:SF1">
    <property type="entry name" value="MYOGLOBIN"/>
    <property type="match status" value="1"/>
</dbReference>
<dbReference type="Pfam" id="PF00042">
    <property type="entry name" value="Globin"/>
    <property type="match status" value="1"/>
</dbReference>
<dbReference type="PRINTS" id="PR00613">
    <property type="entry name" value="MYOGLOBIN"/>
</dbReference>
<dbReference type="SUPFAM" id="SSF46458">
    <property type="entry name" value="Globin-like"/>
    <property type="match status" value="1"/>
</dbReference>
<dbReference type="PROSITE" id="PS01033">
    <property type="entry name" value="GLOBIN"/>
    <property type="match status" value="1"/>
</dbReference>
<gene>
    <name type="primary">MB</name>
</gene>
<reference key="1">
    <citation type="submission" date="2005-12" db="EMBL/GenBank/DDBJ databases">
        <title>cDNA cloning and sequence analysis of myoglobin (Mb) from yak.</title>
        <authorList>
            <person name="Su Y.J."/>
            <person name="Zheng Y.C."/>
            <person name="Piao Y."/>
        </authorList>
    </citation>
    <scope>NUCLEOTIDE SEQUENCE [MRNA]</scope>
</reference>
<accession>Q2MJN4</accession>
<protein>
    <recommendedName>
        <fullName>Myoglobin</fullName>
    </recommendedName>
    <alternativeName>
        <fullName evidence="1">Nitrite reductase MB</fullName>
        <ecNumber evidence="1">1.7.-.-</ecNumber>
    </alternativeName>
    <alternativeName>
        <fullName evidence="1">Pseudoperoxidase MB</fullName>
        <ecNumber evidence="1">1.11.1.-</ecNumber>
    </alternativeName>
</protein>
<keyword id="KW-0963">Cytoplasm</keyword>
<keyword id="KW-0349">Heme</keyword>
<keyword id="KW-0408">Iron</keyword>
<keyword id="KW-0479">Metal-binding</keyword>
<keyword id="KW-0514">Muscle protein</keyword>
<keyword id="KW-0560">Oxidoreductase</keyword>
<keyword id="KW-0561">Oxygen transport</keyword>
<keyword id="KW-0597">Phosphoprotein</keyword>
<keyword id="KW-1185">Reference proteome</keyword>
<keyword id="KW-0813">Transport</keyword>
<comment type="function">
    <text evidence="1">Monomeric heme protein which primary function is to store oxygen and facilitate its diffusion within muscle tissues. Reversibly binds oxygen through a pentacoordinated heme iron and enables its timely and efficient release as needed during periods of heightened demand. Depending on the oxidative conditions of tissues and cells, and in addition to its ability to bind oxygen, it also has a nitrite reductase activity whereby it regulates the production of bioactive nitric oxide. Under stress conditions, like hypoxia and anoxia, it also protects cells against reactive oxygen species thanks to its pseudoperoxidase activity.</text>
</comment>
<comment type="catalytic activity">
    <reaction evidence="1">
        <text>Fe(III)-heme b-[protein] + nitric oxide + H2O = Fe(II)-heme b-[protein] + nitrite + 2 H(+)</text>
        <dbReference type="Rhea" id="RHEA:77711"/>
        <dbReference type="Rhea" id="RHEA-COMP:18975"/>
        <dbReference type="Rhea" id="RHEA-COMP:18976"/>
        <dbReference type="ChEBI" id="CHEBI:15377"/>
        <dbReference type="ChEBI" id="CHEBI:15378"/>
        <dbReference type="ChEBI" id="CHEBI:16301"/>
        <dbReference type="ChEBI" id="CHEBI:16480"/>
        <dbReference type="ChEBI" id="CHEBI:55376"/>
        <dbReference type="ChEBI" id="CHEBI:60344"/>
    </reaction>
    <physiologicalReaction direction="right-to-left" evidence="1">
        <dbReference type="Rhea" id="RHEA:77713"/>
    </physiologicalReaction>
</comment>
<comment type="catalytic activity">
    <reaction evidence="1">
        <text>H2O2 + AH2 = A + 2 H2O</text>
        <dbReference type="Rhea" id="RHEA:30275"/>
        <dbReference type="ChEBI" id="CHEBI:13193"/>
        <dbReference type="ChEBI" id="CHEBI:15377"/>
        <dbReference type="ChEBI" id="CHEBI:16240"/>
        <dbReference type="ChEBI" id="CHEBI:17499"/>
    </reaction>
</comment>
<comment type="subunit">
    <text evidence="2">Monomeric.</text>
</comment>
<comment type="subcellular location">
    <subcellularLocation>
        <location evidence="1">Cytoplasm</location>
        <location evidence="1">Sarcoplasm</location>
    </subcellularLocation>
</comment>
<comment type="similarity">
    <text evidence="7">Belongs to the globin family.</text>
</comment>
<sequence>MGLSDGEWQLVLNAWGKVEADVAGHGQEVLIRLFTGHPETLEKFDKFKHLKTEAEMKASEDLKKHGNTVLTALGGILKKKGHHEAEVKHLAESHANKHKIPVKYLEFISDAIIHVLHAKHPSDFGADAQAAMSKALELFRNDMAAQYKVLGFHG</sequence>
<feature type="chain" id="PRO_0000253471" description="Myoglobin">
    <location>
        <begin position="1"/>
        <end position="154"/>
    </location>
</feature>
<feature type="domain" description="Globin" evidence="7">
    <location>
        <begin position="2"/>
        <end position="148"/>
    </location>
</feature>
<feature type="binding site" evidence="5">
    <location>
        <position position="65"/>
    </location>
    <ligand>
        <name>nitrite</name>
        <dbReference type="ChEBI" id="CHEBI:16301"/>
    </ligand>
</feature>
<feature type="binding site" evidence="3 7">
    <location>
        <position position="65"/>
    </location>
    <ligand>
        <name>O2</name>
        <dbReference type="ChEBI" id="CHEBI:15379"/>
    </ligand>
</feature>
<feature type="binding site" description="proximal binding residue" evidence="1">
    <location>
        <position position="94"/>
    </location>
    <ligand>
        <name>heme b</name>
        <dbReference type="ChEBI" id="CHEBI:60344"/>
    </ligand>
    <ligandPart>
        <name>Fe</name>
        <dbReference type="ChEBI" id="CHEBI:18248"/>
    </ligandPart>
</feature>
<feature type="modified residue" description="Phosphoserine" evidence="6">
    <location>
        <position position="4"/>
    </location>
</feature>
<feature type="modified residue" description="Phosphothreonine" evidence="4">
    <location>
        <position position="68"/>
    </location>
</feature>
<organism>
    <name type="scientific">Bos mutus grunniens</name>
    <name type="common">Wild yak</name>
    <name type="synonym">Bos grunniens</name>
    <dbReference type="NCBI Taxonomy" id="30521"/>
    <lineage>
        <taxon>Eukaryota</taxon>
        <taxon>Metazoa</taxon>
        <taxon>Chordata</taxon>
        <taxon>Craniata</taxon>
        <taxon>Vertebrata</taxon>
        <taxon>Euteleostomi</taxon>
        <taxon>Mammalia</taxon>
        <taxon>Eutheria</taxon>
        <taxon>Laurasiatheria</taxon>
        <taxon>Artiodactyla</taxon>
        <taxon>Ruminantia</taxon>
        <taxon>Pecora</taxon>
        <taxon>Bovidae</taxon>
        <taxon>Bovinae</taxon>
        <taxon>Bos</taxon>
    </lineage>
</organism>
<name>MYG_BOSMU</name>